<reference key="1">
    <citation type="submission" date="2008-05" db="EMBL/GenBank/DDBJ databases">
        <title>Complete sequence of Shigella boydii serotype 18 strain BS512.</title>
        <authorList>
            <person name="Rasko D.A."/>
            <person name="Rosovitz M."/>
            <person name="Maurelli A.T."/>
            <person name="Myers G."/>
            <person name="Seshadri R."/>
            <person name="Cer R."/>
            <person name="Jiang L."/>
            <person name="Ravel J."/>
            <person name="Sebastian Y."/>
        </authorList>
    </citation>
    <scope>NUCLEOTIDE SEQUENCE [LARGE SCALE GENOMIC DNA]</scope>
    <source>
        <strain>CDC 3083-94 / BS512</strain>
    </source>
</reference>
<accession>B2TV73</accession>
<evidence type="ECO:0000255" key="1">
    <source>
        <dbReference type="HAMAP-Rule" id="MF_01015"/>
    </source>
</evidence>
<gene>
    <name evidence="1" type="primary">ybjL</name>
    <name type="ordered locus">SbBS512_E2485</name>
</gene>
<proteinExistence type="inferred from homology"/>
<protein>
    <recommendedName>
        <fullName evidence="1">Putative transport protein YbjL</fullName>
    </recommendedName>
</protein>
<organism>
    <name type="scientific">Shigella boydii serotype 18 (strain CDC 3083-94 / BS512)</name>
    <dbReference type="NCBI Taxonomy" id="344609"/>
    <lineage>
        <taxon>Bacteria</taxon>
        <taxon>Pseudomonadati</taxon>
        <taxon>Pseudomonadota</taxon>
        <taxon>Gammaproteobacteria</taxon>
        <taxon>Enterobacterales</taxon>
        <taxon>Enterobacteriaceae</taxon>
        <taxon>Shigella</taxon>
    </lineage>
</organism>
<dbReference type="EMBL" id="CP001063">
    <property type="protein sequence ID" value="ACD07064.1"/>
    <property type="molecule type" value="Genomic_DNA"/>
</dbReference>
<dbReference type="RefSeq" id="WP_001024876.1">
    <property type="nucleotide sequence ID" value="NC_010658.1"/>
</dbReference>
<dbReference type="SMR" id="B2TV73"/>
<dbReference type="STRING" id="344609.SbBS512_E2485"/>
<dbReference type="KEGG" id="sbc:SbBS512_E2485"/>
<dbReference type="HOGENOM" id="CLU_035023_2_2_6"/>
<dbReference type="Proteomes" id="UP000001030">
    <property type="component" value="Chromosome"/>
</dbReference>
<dbReference type="GO" id="GO:0005886">
    <property type="term" value="C:plasma membrane"/>
    <property type="evidence" value="ECO:0007669"/>
    <property type="project" value="UniProtKB-SubCell"/>
</dbReference>
<dbReference type="GO" id="GO:0008324">
    <property type="term" value="F:monoatomic cation transmembrane transporter activity"/>
    <property type="evidence" value="ECO:0007669"/>
    <property type="project" value="InterPro"/>
</dbReference>
<dbReference type="GO" id="GO:0006813">
    <property type="term" value="P:potassium ion transport"/>
    <property type="evidence" value="ECO:0007669"/>
    <property type="project" value="InterPro"/>
</dbReference>
<dbReference type="FunFam" id="3.30.70.1450:FF:000003">
    <property type="entry name" value="Putative transport protein YbjL"/>
    <property type="match status" value="1"/>
</dbReference>
<dbReference type="Gene3D" id="3.30.70.1450">
    <property type="entry name" value="Regulator of K+ conductance, C-terminal domain"/>
    <property type="match status" value="2"/>
</dbReference>
<dbReference type="HAMAP" id="MF_01015">
    <property type="entry name" value="YbjL"/>
    <property type="match status" value="1"/>
</dbReference>
<dbReference type="InterPro" id="IPR050144">
    <property type="entry name" value="AAE_transporter"/>
</dbReference>
<dbReference type="InterPro" id="IPR006037">
    <property type="entry name" value="RCK_C"/>
</dbReference>
<dbReference type="InterPro" id="IPR036721">
    <property type="entry name" value="RCK_C_sf"/>
</dbReference>
<dbReference type="InterPro" id="IPR023017">
    <property type="entry name" value="Transp_YbjL_put"/>
</dbReference>
<dbReference type="InterPro" id="IPR006512">
    <property type="entry name" value="YidE_YbjL"/>
</dbReference>
<dbReference type="NCBIfam" id="NF003440">
    <property type="entry name" value="PRK04972.1"/>
    <property type="match status" value="1"/>
</dbReference>
<dbReference type="NCBIfam" id="TIGR01625">
    <property type="entry name" value="YidE_YbjL_dupl"/>
    <property type="match status" value="2"/>
</dbReference>
<dbReference type="PANTHER" id="PTHR30445">
    <property type="entry name" value="K(+)_H(+) ANTIPORTER SUBUNIT KHTT"/>
    <property type="match status" value="1"/>
</dbReference>
<dbReference type="PANTHER" id="PTHR30445:SF10">
    <property type="entry name" value="TRANSPORT PROTEIN YBJL-RELATED"/>
    <property type="match status" value="1"/>
</dbReference>
<dbReference type="Pfam" id="PF06826">
    <property type="entry name" value="Asp-Al_Ex"/>
    <property type="match status" value="2"/>
</dbReference>
<dbReference type="Pfam" id="PF02080">
    <property type="entry name" value="TrkA_C"/>
    <property type="match status" value="2"/>
</dbReference>
<dbReference type="SUPFAM" id="SSF116726">
    <property type="entry name" value="TrkA C-terminal domain-like"/>
    <property type="match status" value="2"/>
</dbReference>
<dbReference type="PROSITE" id="PS51202">
    <property type="entry name" value="RCK_C"/>
    <property type="match status" value="2"/>
</dbReference>
<feature type="chain" id="PRO_1000135197" description="Putative transport protein YbjL">
    <location>
        <begin position="1"/>
        <end position="561"/>
    </location>
</feature>
<feature type="transmembrane region" description="Helical" evidence="1">
    <location>
        <begin position="8"/>
        <end position="28"/>
    </location>
</feature>
<feature type="transmembrane region" description="Helical" evidence="1">
    <location>
        <begin position="32"/>
        <end position="52"/>
    </location>
</feature>
<feature type="transmembrane region" description="Helical" evidence="1">
    <location>
        <begin position="66"/>
        <end position="86"/>
    </location>
</feature>
<feature type="transmembrane region" description="Helical" evidence="1">
    <location>
        <begin position="94"/>
        <end position="114"/>
    </location>
</feature>
<feature type="transmembrane region" description="Helical" evidence="1">
    <location>
        <begin position="158"/>
        <end position="178"/>
    </location>
</feature>
<feature type="transmembrane region" description="Helical" evidence="1">
    <location>
        <begin position="383"/>
        <end position="403"/>
    </location>
</feature>
<feature type="transmembrane region" description="Helical" evidence="1">
    <location>
        <begin position="406"/>
        <end position="426"/>
    </location>
</feature>
<feature type="transmembrane region" description="Helical" evidence="1">
    <location>
        <begin position="451"/>
        <end position="471"/>
    </location>
</feature>
<feature type="transmembrane region" description="Helical" evidence="1">
    <location>
        <begin position="475"/>
        <end position="495"/>
    </location>
</feature>
<feature type="transmembrane region" description="Helical" evidence="1">
    <location>
        <begin position="540"/>
        <end position="560"/>
    </location>
</feature>
<feature type="domain" description="RCK C-terminal 1" evidence="1">
    <location>
        <begin position="200"/>
        <end position="288"/>
    </location>
</feature>
<feature type="domain" description="RCK C-terminal 2" evidence="1">
    <location>
        <begin position="292"/>
        <end position="373"/>
    </location>
</feature>
<sequence length="561" mass="60351">MNINVAELLNGNYILLLFVVLALGLCLGKLRLGSIQLGNSIGVLVVSLLLGQQHFSINTDALNLGFMLFIFCVGVEAGPNFFSIFFRDGKNYLMLALVMVGSALVIALGLGKLFGWDIGLTAGMLAGSMTSTPVLVGAGDTLRHSGMESRQLSLALDNLSLGYALTYLIGLVSLIVGARYLPKLQHQDLQTSAQQIARERGLDTDANRKVYLPVIRAYRVGPELVAWTDGKNLRELGIYRQTGCYIERIRRNGILANPDGDAVLQMGDEIALVGYPDAHARLDPSFRNGKEVFDRDLLDMRIVTEEVVVKNHNAVGKRLAQLKLTDHGCFLNRVIRSQIEMPIDDNVVLNKGDVLQVSGDARRVKTIADRIGFISIHSQVTDLLAFCAFFVIGLMIGMITFQFSTFSFGMGNAAGLLFAGIMLGFMRANHPTFGYIPQGALSMVKEFGLMVFMAGVGLSAGSGINNGLGAIGGQMLIAGLIVSLVPVVICFLFGAYVLRMNRALLFGAMMGARTCAPAMEIISDTARSNIPALGYAGTYAIANVLLTLAGTIIVMVWPGLG</sequence>
<comment type="subcellular location">
    <subcellularLocation>
        <location evidence="1">Cell membrane</location>
        <topology evidence="1">Multi-pass membrane protein</topology>
    </subcellularLocation>
</comment>
<comment type="similarity">
    <text evidence="1">Belongs to the AAE transporter (TC 2.A.81) family. YbjL subfamily.</text>
</comment>
<keyword id="KW-1003">Cell membrane</keyword>
<keyword id="KW-0472">Membrane</keyword>
<keyword id="KW-1185">Reference proteome</keyword>
<keyword id="KW-0677">Repeat</keyword>
<keyword id="KW-0812">Transmembrane</keyword>
<keyword id="KW-1133">Transmembrane helix</keyword>
<keyword id="KW-0813">Transport</keyword>
<name>YBJL_SHIB3</name>